<evidence type="ECO:0000255" key="1">
    <source>
        <dbReference type="PROSITE-ProRule" id="PRU00720"/>
    </source>
</evidence>
<evidence type="ECO:0000256" key="2">
    <source>
        <dbReference type="SAM" id="MobiDB-lite"/>
    </source>
</evidence>
<evidence type="ECO:0000305" key="3"/>
<comment type="caution">
    <text evidence="3">Could be the product of a pseudogene.</text>
</comment>
<sequence>MLQLAGVSNSTCGGVRNVSVETRNVKPQGKDSKAEENGSHSFMHSMDPQLERQMETTQNLVDSYMAIVNKTVWDLMVGAKPKTTMHIMIYNVHAPPHGDQGVHLLGAAVQPALAWEREDTHGGVGRVGTAARRDAASQSCCPTCTRLGTRRHSWRSRQSRHSGATRLAWEEIDTPGGVGRAGTAARRDSRGNEKTLLEESAEQADQGVHLLGAAVQPALA</sequence>
<dbReference type="EMBL" id="AK127834">
    <property type="protein sequence ID" value="BAC87154.1"/>
    <property type="molecule type" value="mRNA"/>
</dbReference>
<dbReference type="EMBL" id="AC090825">
    <property type="status" value="NOT_ANNOTATED_CDS"/>
    <property type="molecule type" value="Genomic_DNA"/>
</dbReference>
<dbReference type="SMR" id="Q6ZS02"/>
<dbReference type="GlyGen" id="Q6ZS02">
    <property type="glycosylation" value="2 sites, 1 O-linked glycan (2 sites)"/>
</dbReference>
<dbReference type="iPTMnet" id="Q6ZS02"/>
<dbReference type="PhosphoSitePlus" id="Q6ZS02"/>
<dbReference type="BioMuta" id="HGNC:35199"/>
<dbReference type="DMDM" id="74711301"/>
<dbReference type="jPOST" id="Q6ZS02"/>
<dbReference type="MassIVE" id="Q6ZS02"/>
<dbReference type="ProteomicsDB" id="68177"/>
<dbReference type="AGR" id="HGNC:35199"/>
<dbReference type="GeneCards" id="DNM1P46"/>
<dbReference type="HGNC" id="HGNC:35199">
    <property type="gene designation" value="DNM1P46"/>
</dbReference>
<dbReference type="neXtProt" id="NX_Q6ZS02"/>
<dbReference type="InParanoid" id="Q6ZS02"/>
<dbReference type="PAN-GO" id="Q6ZS02">
    <property type="GO annotations" value="0 GO annotations based on evolutionary models"/>
</dbReference>
<dbReference type="PhylomeDB" id="Q6ZS02"/>
<dbReference type="Pharos" id="Q6ZS02">
    <property type="development level" value="Tdark"/>
</dbReference>
<dbReference type="Proteomes" id="UP000005640">
    <property type="component" value="Unplaced"/>
</dbReference>
<dbReference type="RNAct" id="Q6ZS02">
    <property type="molecule type" value="protein"/>
</dbReference>
<dbReference type="Gene3D" id="1.20.120.1240">
    <property type="entry name" value="Dynamin, middle domain"/>
    <property type="match status" value="1"/>
</dbReference>
<dbReference type="InterPro" id="IPR020850">
    <property type="entry name" value="GED_dom"/>
</dbReference>
<dbReference type="PROSITE" id="PS51388">
    <property type="entry name" value="GED"/>
    <property type="match status" value="1"/>
</dbReference>
<organism>
    <name type="scientific">Homo sapiens</name>
    <name type="common">Human</name>
    <dbReference type="NCBI Taxonomy" id="9606"/>
    <lineage>
        <taxon>Eukaryota</taxon>
        <taxon>Metazoa</taxon>
        <taxon>Chordata</taxon>
        <taxon>Craniata</taxon>
        <taxon>Vertebrata</taxon>
        <taxon>Euteleostomi</taxon>
        <taxon>Mammalia</taxon>
        <taxon>Eutheria</taxon>
        <taxon>Euarchontoglires</taxon>
        <taxon>Primates</taxon>
        <taxon>Haplorrhini</taxon>
        <taxon>Catarrhini</taxon>
        <taxon>Hominidae</taxon>
        <taxon>Homo</taxon>
    </lineage>
</organism>
<gene>
    <name type="primary">DNM1P46</name>
    <name type="synonym">C15orf51</name>
</gene>
<feature type="chain" id="PRO_0000286873" description="Putative GED domain-containing protein DNM1P46">
    <location>
        <begin position="1"/>
        <end position="220"/>
    </location>
</feature>
<feature type="domain" description="GED" evidence="1">
    <location>
        <begin position="54"/>
        <end position="149"/>
    </location>
</feature>
<feature type="region of interest" description="Disordered" evidence="2">
    <location>
        <begin position="18"/>
        <end position="46"/>
    </location>
</feature>
<feature type="region of interest" description="Disordered" evidence="2">
    <location>
        <begin position="173"/>
        <end position="194"/>
    </location>
</feature>
<feature type="compositionally biased region" description="Basic and acidic residues" evidence="2">
    <location>
        <begin position="28"/>
        <end position="38"/>
    </location>
</feature>
<feature type="compositionally biased region" description="Basic and acidic residues" evidence="2">
    <location>
        <begin position="185"/>
        <end position="194"/>
    </location>
</feature>
<feature type="sequence variant" id="VAR_032224" description="In dbSNP:rs4965539.">
    <original>L</original>
    <variation>V</variation>
    <location>
        <position position="147"/>
    </location>
</feature>
<accession>Q6ZS02</accession>
<accession>Q3ZCN3</accession>
<proteinExistence type="uncertain"/>
<keyword id="KW-1267">Proteomics identification</keyword>
<keyword id="KW-1185">Reference proteome</keyword>
<name>DMP46_HUMAN</name>
<protein>
    <recommendedName>
        <fullName>Putative GED domain-containing protein DNM1P46</fullName>
    </recommendedName>
    <alternativeName>
        <fullName>DNM1 pseudogene 46</fullName>
    </alternativeName>
</protein>
<reference key="1">
    <citation type="journal article" date="2004" name="Nat. Genet.">
        <title>Complete sequencing and characterization of 21,243 full-length human cDNAs.</title>
        <authorList>
            <person name="Ota T."/>
            <person name="Suzuki Y."/>
            <person name="Nishikawa T."/>
            <person name="Otsuki T."/>
            <person name="Sugiyama T."/>
            <person name="Irie R."/>
            <person name="Wakamatsu A."/>
            <person name="Hayashi K."/>
            <person name="Sato H."/>
            <person name="Nagai K."/>
            <person name="Kimura K."/>
            <person name="Makita H."/>
            <person name="Sekine M."/>
            <person name="Obayashi M."/>
            <person name="Nishi T."/>
            <person name="Shibahara T."/>
            <person name="Tanaka T."/>
            <person name="Ishii S."/>
            <person name="Yamamoto J."/>
            <person name="Saito K."/>
            <person name="Kawai Y."/>
            <person name="Isono Y."/>
            <person name="Nakamura Y."/>
            <person name="Nagahari K."/>
            <person name="Murakami K."/>
            <person name="Yasuda T."/>
            <person name="Iwayanagi T."/>
            <person name="Wagatsuma M."/>
            <person name="Shiratori A."/>
            <person name="Sudo H."/>
            <person name="Hosoiri T."/>
            <person name="Kaku Y."/>
            <person name="Kodaira H."/>
            <person name="Kondo H."/>
            <person name="Sugawara M."/>
            <person name="Takahashi M."/>
            <person name="Kanda K."/>
            <person name="Yokoi T."/>
            <person name="Furuya T."/>
            <person name="Kikkawa E."/>
            <person name="Omura Y."/>
            <person name="Abe K."/>
            <person name="Kamihara K."/>
            <person name="Katsuta N."/>
            <person name="Sato K."/>
            <person name="Tanikawa M."/>
            <person name="Yamazaki M."/>
            <person name="Ninomiya K."/>
            <person name="Ishibashi T."/>
            <person name="Yamashita H."/>
            <person name="Murakawa K."/>
            <person name="Fujimori K."/>
            <person name="Tanai H."/>
            <person name="Kimata M."/>
            <person name="Watanabe M."/>
            <person name="Hiraoka S."/>
            <person name="Chiba Y."/>
            <person name="Ishida S."/>
            <person name="Ono Y."/>
            <person name="Takiguchi S."/>
            <person name="Watanabe S."/>
            <person name="Yosida M."/>
            <person name="Hotuta T."/>
            <person name="Kusano J."/>
            <person name="Kanehori K."/>
            <person name="Takahashi-Fujii A."/>
            <person name="Hara H."/>
            <person name="Tanase T.-O."/>
            <person name="Nomura Y."/>
            <person name="Togiya S."/>
            <person name="Komai F."/>
            <person name="Hara R."/>
            <person name="Takeuchi K."/>
            <person name="Arita M."/>
            <person name="Imose N."/>
            <person name="Musashino K."/>
            <person name="Yuuki H."/>
            <person name="Oshima A."/>
            <person name="Sasaki N."/>
            <person name="Aotsuka S."/>
            <person name="Yoshikawa Y."/>
            <person name="Matsunawa H."/>
            <person name="Ichihara T."/>
            <person name="Shiohata N."/>
            <person name="Sano S."/>
            <person name="Moriya S."/>
            <person name="Momiyama H."/>
            <person name="Satoh N."/>
            <person name="Takami S."/>
            <person name="Terashima Y."/>
            <person name="Suzuki O."/>
            <person name="Nakagawa S."/>
            <person name="Senoh A."/>
            <person name="Mizoguchi H."/>
            <person name="Goto Y."/>
            <person name="Shimizu F."/>
            <person name="Wakebe H."/>
            <person name="Hishigaki H."/>
            <person name="Watanabe T."/>
            <person name="Sugiyama A."/>
            <person name="Takemoto M."/>
            <person name="Kawakami B."/>
            <person name="Yamazaki M."/>
            <person name="Watanabe K."/>
            <person name="Kumagai A."/>
            <person name="Itakura S."/>
            <person name="Fukuzumi Y."/>
            <person name="Fujimori Y."/>
            <person name="Komiyama M."/>
            <person name="Tashiro H."/>
            <person name="Tanigami A."/>
            <person name="Fujiwara T."/>
            <person name="Ono T."/>
            <person name="Yamada K."/>
            <person name="Fujii Y."/>
            <person name="Ozaki K."/>
            <person name="Hirao M."/>
            <person name="Ohmori Y."/>
            <person name="Kawabata A."/>
            <person name="Hikiji T."/>
            <person name="Kobatake N."/>
            <person name="Inagaki H."/>
            <person name="Ikema Y."/>
            <person name="Okamoto S."/>
            <person name="Okitani R."/>
            <person name="Kawakami T."/>
            <person name="Noguchi S."/>
            <person name="Itoh T."/>
            <person name="Shigeta K."/>
            <person name="Senba T."/>
            <person name="Matsumura K."/>
            <person name="Nakajima Y."/>
            <person name="Mizuno T."/>
            <person name="Morinaga M."/>
            <person name="Sasaki M."/>
            <person name="Togashi T."/>
            <person name="Oyama M."/>
            <person name="Hata H."/>
            <person name="Watanabe M."/>
            <person name="Komatsu T."/>
            <person name="Mizushima-Sugano J."/>
            <person name="Satoh T."/>
            <person name="Shirai Y."/>
            <person name="Takahashi Y."/>
            <person name="Nakagawa K."/>
            <person name="Okumura K."/>
            <person name="Nagase T."/>
            <person name="Nomura N."/>
            <person name="Kikuchi H."/>
            <person name="Masuho Y."/>
            <person name="Yamashita R."/>
            <person name="Nakai K."/>
            <person name="Yada T."/>
            <person name="Nakamura Y."/>
            <person name="Ohara O."/>
            <person name="Isogai T."/>
            <person name="Sugano S."/>
        </authorList>
    </citation>
    <scope>NUCLEOTIDE SEQUENCE [LARGE SCALE MRNA]</scope>
    <source>
        <tissue>Placenta</tissue>
    </source>
</reference>
<reference key="2">
    <citation type="journal article" date="2006" name="Nature">
        <title>Analysis of the DNA sequence and duplication history of human chromosome 15.</title>
        <authorList>
            <person name="Zody M.C."/>
            <person name="Garber M."/>
            <person name="Sharpe T."/>
            <person name="Young S.K."/>
            <person name="Rowen L."/>
            <person name="O'Neill K."/>
            <person name="Whittaker C.A."/>
            <person name="Kamal M."/>
            <person name="Chang J.L."/>
            <person name="Cuomo C.A."/>
            <person name="Dewar K."/>
            <person name="FitzGerald M.G."/>
            <person name="Kodira C.D."/>
            <person name="Madan A."/>
            <person name="Qin S."/>
            <person name="Yang X."/>
            <person name="Abbasi N."/>
            <person name="Abouelleil A."/>
            <person name="Arachchi H.M."/>
            <person name="Baradarani L."/>
            <person name="Birditt B."/>
            <person name="Bloom S."/>
            <person name="Bloom T."/>
            <person name="Borowsky M.L."/>
            <person name="Burke J."/>
            <person name="Butler J."/>
            <person name="Cook A."/>
            <person name="DeArellano K."/>
            <person name="DeCaprio D."/>
            <person name="Dorris L. III"/>
            <person name="Dors M."/>
            <person name="Eichler E.E."/>
            <person name="Engels R."/>
            <person name="Fahey J."/>
            <person name="Fleetwood P."/>
            <person name="Friedman C."/>
            <person name="Gearin G."/>
            <person name="Hall J.L."/>
            <person name="Hensley G."/>
            <person name="Johnson E."/>
            <person name="Jones C."/>
            <person name="Kamat A."/>
            <person name="Kaur A."/>
            <person name="Locke D.P."/>
            <person name="Madan A."/>
            <person name="Munson G."/>
            <person name="Jaffe D.B."/>
            <person name="Lui A."/>
            <person name="Macdonald P."/>
            <person name="Mauceli E."/>
            <person name="Naylor J.W."/>
            <person name="Nesbitt R."/>
            <person name="Nicol R."/>
            <person name="O'Leary S.B."/>
            <person name="Ratcliffe A."/>
            <person name="Rounsley S."/>
            <person name="She X."/>
            <person name="Sneddon K.M.B."/>
            <person name="Stewart S."/>
            <person name="Sougnez C."/>
            <person name="Stone S.M."/>
            <person name="Topham K."/>
            <person name="Vincent D."/>
            <person name="Wang S."/>
            <person name="Zimmer A.R."/>
            <person name="Birren B.W."/>
            <person name="Hood L."/>
            <person name="Lander E.S."/>
            <person name="Nusbaum C."/>
        </authorList>
    </citation>
    <scope>NUCLEOTIDE SEQUENCE [LARGE SCALE GENOMIC DNA]</scope>
</reference>